<gene>
    <name type="primary">psmA1</name>
    <name type="ordered locus">SAS0409.4</name>
</gene>
<proteinExistence type="inferred from homology"/>
<comment type="function">
    <text evidence="1">Peptide which can recruit, activate and subsequently lyse human neutrophils, thus eliminating the main cellular defense against infection.</text>
</comment>
<comment type="similarity">
    <text evidence="2">Belongs to the phenol-soluble modulin alpha peptides family.</text>
</comment>
<accession>P0C7Y9</accession>
<organism>
    <name type="scientific">Staphylococcus aureus (strain MSSA476)</name>
    <dbReference type="NCBI Taxonomy" id="282459"/>
    <lineage>
        <taxon>Bacteria</taxon>
        <taxon>Bacillati</taxon>
        <taxon>Bacillota</taxon>
        <taxon>Bacilli</taxon>
        <taxon>Bacillales</taxon>
        <taxon>Staphylococcaceae</taxon>
        <taxon>Staphylococcus</taxon>
    </lineage>
</organism>
<dbReference type="EMBL" id="BX571857">
    <property type="status" value="NOT_ANNOTATED_CDS"/>
    <property type="molecule type" value="Genomic_DNA"/>
</dbReference>
<dbReference type="SMR" id="P0C7Y9"/>
<dbReference type="GO" id="GO:0031640">
    <property type="term" value="P:killing of cells of another organism"/>
    <property type="evidence" value="ECO:0007669"/>
    <property type="project" value="UniProtKB-KW"/>
</dbReference>
<dbReference type="InterPro" id="IPR031429">
    <property type="entry name" value="PSM_alpha"/>
</dbReference>
<dbReference type="NCBIfam" id="NF033425">
    <property type="entry name" value="PSM_alpha_1_2"/>
    <property type="match status" value="1"/>
</dbReference>
<dbReference type="Pfam" id="PF17063">
    <property type="entry name" value="PSMalpha"/>
    <property type="match status" value="1"/>
</dbReference>
<feature type="peptide" id="PRO_0000345040" description="Phenol-soluble modulin alpha 1 peptide">
    <location>
        <begin position="1"/>
        <end position="21"/>
    </location>
</feature>
<protein>
    <recommendedName>
        <fullName>Phenol-soluble modulin alpha 1 peptide</fullName>
    </recommendedName>
</protein>
<reference key="1">
    <citation type="journal article" date="2004" name="Proc. Natl. Acad. Sci. U.S.A.">
        <title>Complete genomes of two clinical Staphylococcus aureus strains: evidence for the rapid evolution of virulence and drug resistance.</title>
        <authorList>
            <person name="Holden M.T.G."/>
            <person name="Feil E.J."/>
            <person name="Lindsay J.A."/>
            <person name="Peacock S.J."/>
            <person name="Day N.P.J."/>
            <person name="Enright M.C."/>
            <person name="Foster T.J."/>
            <person name="Moore C.E."/>
            <person name="Hurst L."/>
            <person name="Atkin R."/>
            <person name="Barron A."/>
            <person name="Bason N."/>
            <person name="Bentley S.D."/>
            <person name="Chillingworth C."/>
            <person name="Chillingworth T."/>
            <person name="Churcher C."/>
            <person name="Clark L."/>
            <person name="Corton C."/>
            <person name="Cronin A."/>
            <person name="Doggett J."/>
            <person name="Dowd L."/>
            <person name="Feltwell T."/>
            <person name="Hance Z."/>
            <person name="Harris B."/>
            <person name="Hauser H."/>
            <person name="Holroyd S."/>
            <person name="Jagels K."/>
            <person name="James K.D."/>
            <person name="Lennard N."/>
            <person name="Line A."/>
            <person name="Mayes R."/>
            <person name="Moule S."/>
            <person name="Mungall K."/>
            <person name="Ormond D."/>
            <person name="Quail M.A."/>
            <person name="Rabbinowitsch E."/>
            <person name="Rutherford K.M."/>
            <person name="Sanders M."/>
            <person name="Sharp S."/>
            <person name="Simmonds M."/>
            <person name="Stevens K."/>
            <person name="Whitehead S."/>
            <person name="Barrell B.G."/>
            <person name="Spratt B.G."/>
            <person name="Parkhill J."/>
        </authorList>
    </citation>
    <scope>NUCLEOTIDE SEQUENCE [LARGE SCALE GENOMIC DNA]</scope>
    <source>
        <strain>MSSA476</strain>
    </source>
</reference>
<sequence>MGIIAGIIKVIKSLIEQFTGK</sequence>
<keyword id="KW-0204">Cytolysis</keyword>
<keyword id="KW-0843">Virulence</keyword>
<name>PSMA1_STAAS</name>
<evidence type="ECO:0000250" key="1">
    <source>
        <dbReference type="UniProtKB" id="A9JX05"/>
    </source>
</evidence>
<evidence type="ECO:0000305" key="2"/>